<accession>P26374</accession>
<accession>B2RAB9</accession>
<accession>Q17RE0</accession>
<accession>Q9H1Y4</accession>
<keyword id="KW-0963">Cytoplasm</keyword>
<keyword id="KW-0343">GTPase activation</keyword>
<keyword id="KW-0597">Phosphoprotein</keyword>
<keyword id="KW-1267">Proteomics identification</keyword>
<keyword id="KW-1185">Reference proteome</keyword>
<protein>
    <recommendedName>
        <fullName>Rab proteins geranylgeranyltransferase component A 2</fullName>
    </recommendedName>
    <alternativeName>
        <fullName>Choroideremia-like protein</fullName>
    </alternativeName>
    <alternativeName>
        <fullName>Rab escort protein 2</fullName>
        <shortName>REP-2</shortName>
    </alternativeName>
</protein>
<reference key="1">
    <citation type="journal article" date="1992" name="Hum. Mol. Genet.">
        <title>An autosomal homologue of the choroideremia gene colocalizes with the Usher syndrome type II locus on the distal part of chromosome 1q.</title>
        <authorList>
            <person name="Cremers F.P.M."/>
            <person name="Molloy C.M."/>
            <person name="van de Pol D.J.R."/>
            <person name="van den Hurk J.A.J.M."/>
            <person name="Bach I."/>
            <person name="Geurts van Kessel A.H.M."/>
            <person name="Ropers H.-H."/>
        </authorList>
    </citation>
    <scope>NUCLEOTIDE SEQUENCE [MRNA]</scope>
    <source>
        <tissue>Brain</tissue>
    </source>
</reference>
<reference key="2">
    <citation type="journal article" date="2002" name="Gene">
        <title>Different structural organization of the encephalopsin gene in man and mouse.</title>
        <authorList>
            <person name="Kasper G."/>
            <person name="Taudien S."/>
            <person name="Staub E."/>
            <person name="Mennerich D."/>
            <person name="Rieder M."/>
            <person name="Hinzmann B."/>
            <person name="Dahl E."/>
            <person name="Schwidetzky U."/>
            <person name="Rosenthal A."/>
            <person name="Rump A."/>
        </authorList>
    </citation>
    <scope>NUCLEOTIDE SEQUENCE [GENOMIC DNA]</scope>
</reference>
<reference key="3">
    <citation type="journal article" date="2004" name="Nat. Genet.">
        <title>Complete sequencing and characterization of 21,243 full-length human cDNAs.</title>
        <authorList>
            <person name="Ota T."/>
            <person name="Suzuki Y."/>
            <person name="Nishikawa T."/>
            <person name="Otsuki T."/>
            <person name="Sugiyama T."/>
            <person name="Irie R."/>
            <person name="Wakamatsu A."/>
            <person name="Hayashi K."/>
            <person name="Sato H."/>
            <person name="Nagai K."/>
            <person name="Kimura K."/>
            <person name="Makita H."/>
            <person name="Sekine M."/>
            <person name="Obayashi M."/>
            <person name="Nishi T."/>
            <person name="Shibahara T."/>
            <person name="Tanaka T."/>
            <person name="Ishii S."/>
            <person name="Yamamoto J."/>
            <person name="Saito K."/>
            <person name="Kawai Y."/>
            <person name="Isono Y."/>
            <person name="Nakamura Y."/>
            <person name="Nagahari K."/>
            <person name="Murakami K."/>
            <person name="Yasuda T."/>
            <person name="Iwayanagi T."/>
            <person name="Wagatsuma M."/>
            <person name="Shiratori A."/>
            <person name="Sudo H."/>
            <person name="Hosoiri T."/>
            <person name="Kaku Y."/>
            <person name="Kodaira H."/>
            <person name="Kondo H."/>
            <person name="Sugawara M."/>
            <person name="Takahashi M."/>
            <person name="Kanda K."/>
            <person name="Yokoi T."/>
            <person name="Furuya T."/>
            <person name="Kikkawa E."/>
            <person name="Omura Y."/>
            <person name="Abe K."/>
            <person name="Kamihara K."/>
            <person name="Katsuta N."/>
            <person name="Sato K."/>
            <person name="Tanikawa M."/>
            <person name="Yamazaki M."/>
            <person name="Ninomiya K."/>
            <person name="Ishibashi T."/>
            <person name="Yamashita H."/>
            <person name="Murakawa K."/>
            <person name="Fujimori K."/>
            <person name="Tanai H."/>
            <person name="Kimata M."/>
            <person name="Watanabe M."/>
            <person name="Hiraoka S."/>
            <person name="Chiba Y."/>
            <person name="Ishida S."/>
            <person name="Ono Y."/>
            <person name="Takiguchi S."/>
            <person name="Watanabe S."/>
            <person name="Yosida M."/>
            <person name="Hotuta T."/>
            <person name="Kusano J."/>
            <person name="Kanehori K."/>
            <person name="Takahashi-Fujii A."/>
            <person name="Hara H."/>
            <person name="Tanase T.-O."/>
            <person name="Nomura Y."/>
            <person name="Togiya S."/>
            <person name="Komai F."/>
            <person name="Hara R."/>
            <person name="Takeuchi K."/>
            <person name="Arita M."/>
            <person name="Imose N."/>
            <person name="Musashino K."/>
            <person name="Yuuki H."/>
            <person name="Oshima A."/>
            <person name="Sasaki N."/>
            <person name="Aotsuka S."/>
            <person name="Yoshikawa Y."/>
            <person name="Matsunawa H."/>
            <person name="Ichihara T."/>
            <person name="Shiohata N."/>
            <person name="Sano S."/>
            <person name="Moriya S."/>
            <person name="Momiyama H."/>
            <person name="Satoh N."/>
            <person name="Takami S."/>
            <person name="Terashima Y."/>
            <person name="Suzuki O."/>
            <person name="Nakagawa S."/>
            <person name="Senoh A."/>
            <person name="Mizoguchi H."/>
            <person name="Goto Y."/>
            <person name="Shimizu F."/>
            <person name="Wakebe H."/>
            <person name="Hishigaki H."/>
            <person name="Watanabe T."/>
            <person name="Sugiyama A."/>
            <person name="Takemoto M."/>
            <person name="Kawakami B."/>
            <person name="Yamazaki M."/>
            <person name="Watanabe K."/>
            <person name="Kumagai A."/>
            <person name="Itakura S."/>
            <person name="Fukuzumi Y."/>
            <person name="Fujimori Y."/>
            <person name="Komiyama M."/>
            <person name="Tashiro H."/>
            <person name="Tanigami A."/>
            <person name="Fujiwara T."/>
            <person name="Ono T."/>
            <person name="Yamada K."/>
            <person name="Fujii Y."/>
            <person name="Ozaki K."/>
            <person name="Hirao M."/>
            <person name="Ohmori Y."/>
            <person name="Kawabata A."/>
            <person name="Hikiji T."/>
            <person name="Kobatake N."/>
            <person name="Inagaki H."/>
            <person name="Ikema Y."/>
            <person name="Okamoto S."/>
            <person name="Okitani R."/>
            <person name="Kawakami T."/>
            <person name="Noguchi S."/>
            <person name="Itoh T."/>
            <person name="Shigeta K."/>
            <person name="Senba T."/>
            <person name="Matsumura K."/>
            <person name="Nakajima Y."/>
            <person name="Mizuno T."/>
            <person name="Morinaga M."/>
            <person name="Sasaki M."/>
            <person name="Togashi T."/>
            <person name="Oyama M."/>
            <person name="Hata H."/>
            <person name="Watanabe M."/>
            <person name="Komatsu T."/>
            <person name="Mizushima-Sugano J."/>
            <person name="Satoh T."/>
            <person name="Shirai Y."/>
            <person name="Takahashi Y."/>
            <person name="Nakagawa K."/>
            <person name="Okumura K."/>
            <person name="Nagase T."/>
            <person name="Nomura N."/>
            <person name="Kikuchi H."/>
            <person name="Masuho Y."/>
            <person name="Yamashita R."/>
            <person name="Nakai K."/>
            <person name="Yada T."/>
            <person name="Nakamura Y."/>
            <person name="Ohara O."/>
            <person name="Isogai T."/>
            <person name="Sugano S."/>
        </authorList>
    </citation>
    <scope>NUCLEOTIDE SEQUENCE [LARGE SCALE MRNA]</scope>
    <source>
        <tissue>Hippocampus</tissue>
    </source>
</reference>
<reference key="4">
    <citation type="journal article" date="2006" name="Nature">
        <title>The DNA sequence and biological annotation of human chromosome 1.</title>
        <authorList>
            <person name="Gregory S.G."/>
            <person name="Barlow K.F."/>
            <person name="McLay K.E."/>
            <person name="Kaul R."/>
            <person name="Swarbreck D."/>
            <person name="Dunham A."/>
            <person name="Scott C.E."/>
            <person name="Howe K.L."/>
            <person name="Woodfine K."/>
            <person name="Spencer C.C.A."/>
            <person name="Jones M.C."/>
            <person name="Gillson C."/>
            <person name="Searle S."/>
            <person name="Zhou Y."/>
            <person name="Kokocinski F."/>
            <person name="McDonald L."/>
            <person name="Evans R."/>
            <person name="Phillips K."/>
            <person name="Atkinson A."/>
            <person name="Cooper R."/>
            <person name="Jones C."/>
            <person name="Hall R.E."/>
            <person name="Andrews T.D."/>
            <person name="Lloyd C."/>
            <person name="Ainscough R."/>
            <person name="Almeida J.P."/>
            <person name="Ambrose K.D."/>
            <person name="Anderson F."/>
            <person name="Andrew R.W."/>
            <person name="Ashwell R.I.S."/>
            <person name="Aubin K."/>
            <person name="Babbage A.K."/>
            <person name="Bagguley C.L."/>
            <person name="Bailey J."/>
            <person name="Beasley H."/>
            <person name="Bethel G."/>
            <person name="Bird C.P."/>
            <person name="Bray-Allen S."/>
            <person name="Brown J.Y."/>
            <person name="Brown A.J."/>
            <person name="Buckley D."/>
            <person name="Burton J."/>
            <person name="Bye J."/>
            <person name="Carder C."/>
            <person name="Chapman J.C."/>
            <person name="Clark S.Y."/>
            <person name="Clarke G."/>
            <person name="Clee C."/>
            <person name="Cobley V."/>
            <person name="Collier R.E."/>
            <person name="Corby N."/>
            <person name="Coville G.J."/>
            <person name="Davies J."/>
            <person name="Deadman R."/>
            <person name="Dunn M."/>
            <person name="Earthrowl M."/>
            <person name="Ellington A.G."/>
            <person name="Errington H."/>
            <person name="Frankish A."/>
            <person name="Frankland J."/>
            <person name="French L."/>
            <person name="Garner P."/>
            <person name="Garnett J."/>
            <person name="Gay L."/>
            <person name="Ghori M.R.J."/>
            <person name="Gibson R."/>
            <person name="Gilby L.M."/>
            <person name="Gillett W."/>
            <person name="Glithero R.J."/>
            <person name="Grafham D.V."/>
            <person name="Griffiths C."/>
            <person name="Griffiths-Jones S."/>
            <person name="Grocock R."/>
            <person name="Hammond S."/>
            <person name="Harrison E.S.I."/>
            <person name="Hart E."/>
            <person name="Haugen E."/>
            <person name="Heath P.D."/>
            <person name="Holmes S."/>
            <person name="Holt K."/>
            <person name="Howden P.J."/>
            <person name="Hunt A.R."/>
            <person name="Hunt S.E."/>
            <person name="Hunter G."/>
            <person name="Isherwood J."/>
            <person name="James R."/>
            <person name="Johnson C."/>
            <person name="Johnson D."/>
            <person name="Joy A."/>
            <person name="Kay M."/>
            <person name="Kershaw J.K."/>
            <person name="Kibukawa M."/>
            <person name="Kimberley A.M."/>
            <person name="King A."/>
            <person name="Knights A.J."/>
            <person name="Lad H."/>
            <person name="Laird G."/>
            <person name="Lawlor S."/>
            <person name="Leongamornlert D.A."/>
            <person name="Lloyd D.M."/>
            <person name="Loveland J."/>
            <person name="Lovell J."/>
            <person name="Lush M.J."/>
            <person name="Lyne R."/>
            <person name="Martin S."/>
            <person name="Mashreghi-Mohammadi M."/>
            <person name="Matthews L."/>
            <person name="Matthews N.S.W."/>
            <person name="McLaren S."/>
            <person name="Milne S."/>
            <person name="Mistry S."/>
            <person name="Moore M.J.F."/>
            <person name="Nickerson T."/>
            <person name="O'Dell C.N."/>
            <person name="Oliver K."/>
            <person name="Palmeiri A."/>
            <person name="Palmer S.A."/>
            <person name="Parker A."/>
            <person name="Patel D."/>
            <person name="Pearce A.V."/>
            <person name="Peck A.I."/>
            <person name="Pelan S."/>
            <person name="Phelps K."/>
            <person name="Phillimore B.J."/>
            <person name="Plumb R."/>
            <person name="Rajan J."/>
            <person name="Raymond C."/>
            <person name="Rouse G."/>
            <person name="Saenphimmachak C."/>
            <person name="Sehra H.K."/>
            <person name="Sheridan E."/>
            <person name="Shownkeen R."/>
            <person name="Sims S."/>
            <person name="Skuce C.D."/>
            <person name="Smith M."/>
            <person name="Steward C."/>
            <person name="Subramanian S."/>
            <person name="Sycamore N."/>
            <person name="Tracey A."/>
            <person name="Tromans A."/>
            <person name="Van Helmond Z."/>
            <person name="Wall M."/>
            <person name="Wallis J.M."/>
            <person name="White S."/>
            <person name="Whitehead S.L."/>
            <person name="Wilkinson J.E."/>
            <person name="Willey D.L."/>
            <person name="Williams H."/>
            <person name="Wilming L."/>
            <person name="Wray P.W."/>
            <person name="Wu Z."/>
            <person name="Coulson A."/>
            <person name="Vaudin M."/>
            <person name="Sulston J.E."/>
            <person name="Durbin R.M."/>
            <person name="Hubbard T."/>
            <person name="Wooster R."/>
            <person name="Dunham I."/>
            <person name="Carter N.P."/>
            <person name="McVean G."/>
            <person name="Ross M.T."/>
            <person name="Harrow J."/>
            <person name="Olson M.V."/>
            <person name="Beck S."/>
            <person name="Rogers J."/>
            <person name="Bentley D.R."/>
        </authorList>
    </citation>
    <scope>NUCLEOTIDE SEQUENCE [LARGE SCALE GENOMIC DNA]</scope>
</reference>
<reference key="5">
    <citation type="submission" date="2005-07" db="EMBL/GenBank/DDBJ databases">
        <authorList>
            <person name="Mural R.J."/>
            <person name="Istrail S."/>
            <person name="Sutton G.G."/>
            <person name="Florea L."/>
            <person name="Halpern A.L."/>
            <person name="Mobarry C.M."/>
            <person name="Lippert R."/>
            <person name="Walenz B."/>
            <person name="Shatkay H."/>
            <person name="Dew I."/>
            <person name="Miller J.R."/>
            <person name="Flanigan M.J."/>
            <person name="Edwards N.J."/>
            <person name="Bolanos R."/>
            <person name="Fasulo D."/>
            <person name="Halldorsson B.V."/>
            <person name="Hannenhalli S."/>
            <person name="Turner R."/>
            <person name="Yooseph S."/>
            <person name="Lu F."/>
            <person name="Nusskern D.R."/>
            <person name="Shue B.C."/>
            <person name="Zheng X.H."/>
            <person name="Zhong F."/>
            <person name="Delcher A.L."/>
            <person name="Huson D.H."/>
            <person name="Kravitz S.A."/>
            <person name="Mouchard L."/>
            <person name="Reinert K."/>
            <person name="Remington K.A."/>
            <person name="Clark A.G."/>
            <person name="Waterman M.S."/>
            <person name="Eichler E.E."/>
            <person name="Adams M.D."/>
            <person name="Hunkapiller M.W."/>
            <person name="Myers E.W."/>
            <person name="Venter J.C."/>
        </authorList>
    </citation>
    <scope>NUCLEOTIDE SEQUENCE [LARGE SCALE GENOMIC DNA]</scope>
</reference>
<reference key="6">
    <citation type="journal article" date="2004" name="Genome Res.">
        <title>The status, quality, and expansion of the NIH full-length cDNA project: the Mammalian Gene Collection (MGC).</title>
        <authorList>
            <consortium name="The MGC Project Team"/>
        </authorList>
    </citation>
    <scope>NUCLEOTIDE SEQUENCE [LARGE SCALE MRNA]</scope>
    <source>
        <tissue>Brain</tissue>
    </source>
</reference>
<reference key="7">
    <citation type="journal article" date="1994" name="J. Biol. Chem.">
        <title>REP-2, a Rab escort protein encoded by the choroideremia-like gene.</title>
        <authorList>
            <person name="Cremers F.P.M."/>
            <person name="Armstrong S.A."/>
            <person name="Seabra M.C."/>
            <person name="Brown M.S."/>
            <person name="Goldstein J.L."/>
        </authorList>
    </citation>
    <scope>FUNCTION</scope>
    <scope>SUBUNIT</scope>
</reference>
<reference key="8">
    <citation type="journal article" date="2002" name="Protein Expr. Purif.">
        <title>Expression of mammalian Rab Escort protein-1 and -2 in yeast Saccharomyces cerevisiae.</title>
        <authorList>
            <person name="Sidorovitch V."/>
            <person name="Niculae A."/>
            <person name="Kan N."/>
            <person name="Ceacareanu A.C."/>
            <person name="Alexandrov K."/>
        </authorList>
    </citation>
    <scope>FUNCTION</scope>
    <scope>IDENTIFICATION BY MASS SPECTROMETRY</scope>
    <scope>SUBUNIT</scope>
    <scope>SUBCELLULAR LOCATION</scope>
</reference>
<reference key="9">
    <citation type="journal article" date="2004" name="Cell">
        <title>Structure of the Rab7:REP-1 complex: insights into the mechanism of Rab prenylation and choroideremia disease.</title>
        <authorList>
            <person name="Rak A."/>
            <person name="Pylypenko O."/>
            <person name="Niculae A."/>
            <person name="Pyatkov K."/>
            <person name="Goody R.S."/>
            <person name="Alexandrov K."/>
        </authorList>
    </citation>
    <scope>FUNCTION</scope>
    <scope>INTERACTION WITH RAB1A; RAB7A AND RAB27A</scope>
    <scope>SUBUNIT</scope>
</reference>
<reference key="10">
    <citation type="journal article" date="2008" name="Proc. Natl. Acad. Sci. U.S.A.">
        <title>A quantitative atlas of mitotic phosphorylation.</title>
        <authorList>
            <person name="Dephoure N."/>
            <person name="Zhou C."/>
            <person name="Villen J."/>
            <person name="Beausoleil S.A."/>
            <person name="Bakalarski C.E."/>
            <person name="Elledge S.J."/>
            <person name="Gygi S.P."/>
        </authorList>
    </citation>
    <scope>IDENTIFICATION BY MASS SPECTROMETRY [LARGE SCALE ANALYSIS]</scope>
    <source>
        <tissue>Cervix carcinoma</tissue>
    </source>
</reference>
<reference key="11">
    <citation type="journal article" date="2011" name="BMC Syst. Biol.">
        <title>Initial characterization of the human central proteome.</title>
        <authorList>
            <person name="Burkard T.R."/>
            <person name="Planyavsky M."/>
            <person name="Kaupe I."/>
            <person name="Breitwieser F.P."/>
            <person name="Buerckstuemmer T."/>
            <person name="Bennett K.L."/>
            <person name="Superti-Furga G."/>
            <person name="Colinge J."/>
        </authorList>
    </citation>
    <scope>IDENTIFICATION BY MASS SPECTROMETRY [LARGE SCALE ANALYSIS]</scope>
</reference>
<reference key="12">
    <citation type="journal article" date="2013" name="J. Proteome Res.">
        <title>Toward a comprehensive characterization of a human cancer cell phosphoproteome.</title>
        <authorList>
            <person name="Zhou H."/>
            <person name="Di Palma S."/>
            <person name="Preisinger C."/>
            <person name="Peng M."/>
            <person name="Polat A.N."/>
            <person name="Heck A.J."/>
            <person name="Mohammed S."/>
        </authorList>
    </citation>
    <scope>PHOSPHORYLATION [LARGE SCALE ANALYSIS] AT SER-649</scope>
    <scope>IDENTIFICATION BY MASS SPECTROMETRY [LARGE SCALE ANALYSIS]</scope>
    <source>
        <tissue>Cervix carcinoma</tissue>
    </source>
</reference>
<reference key="13">
    <citation type="journal article" date="2016" name="Elife">
        <title>Phosphoproteomics reveals that Parkinson's disease kinase LRRK2 regulates a subset of Rab GTPases.</title>
        <authorList>
            <person name="Steger M."/>
            <person name="Tonelli F."/>
            <person name="Ito G."/>
            <person name="Davies P."/>
            <person name="Trost M."/>
            <person name="Vetter M."/>
            <person name="Wachter S."/>
            <person name="Lorentzen E."/>
            <person name="Duddy G."/>
            <person name="Wilson S."/>
            <person name="Baptista M.A."/>
            <person name="Fiske B.K."/>
            <person name="Fell M.J."/>
            <person name="Morrow J.A."/>
            <person name="Reith A.D."/>
            <person name="Alessi D.R."/>
            <person name="Mann M."/>
        </authorList>
    </citation>
    <scope>IDENTIFICATION BY MASS SPECTROMETRY</scope>
    <scope>INTERACTION WITH RAB8A</scope>
</reference>
<reference key="14">
    <citation type="journal article" date="2017" name="Elife">
        <title>Systematic proteomic analysis of LRRK2-mediated Rab GTPase phosphorylation establishes a connection to ciliogenesis.</title>
        <authorList>
            <person name="Steger M."/>
            <person name="Diez F."/>
            <person name="Dhekne H.S."/>
            <person name="Lis P."/>
            <person name="Nirujogi R.S."/>
            <person name="Karayel O."/>
            <person name="Tonelli F."/>
            <person name="Martinez T.N."/>
            <person name="Lorentzen E."/>
            <person name="Pfeffer S.R."/>
            <person name="Alessi D.R."/>
            <person name="Mann M."/>
        </authorList>
    </citation>
    <scope>IDENTIFICATION BY MASS SPECTROMETRY</scope>
    <scope>INTERACTION WITH RAB3A; RAB3B; RAB3C; RAB3D; RAB5B; RAB5C; RAB8A; RAB8B; RAB10; RAB12; RAB35 AND RAB43</scope>
</reference>
<dbReference type="EMBL" id="X64728">
    <property type="protein sequence ID" value="CAA45979.1"/>
    <property type="molecule type" value="mRNA"/>
</dbReference>
<dbReference type="EMBL" id="AF482426">
    <property type="protein sequence ID" value="AAO15716.1"/>
    <property type="molecule type" value="Genomic_DNA"/>
</dbReference>
<dbReference type="EMBL" id="AK314125">
    <property type="protein sequence ID" value="BAG36816.1"/>
    <property type="molecule type" value="mRNA"/>
</dbReference>
<dbReference type="EMBL" id="AL133390">
    <property type="status" value="NOT_ANNOTATED_CDS"/>
    <property type="molecule type" value="Genomic_DNA"/>
</dbReference>
<dbReference type="EMBL" id="CH471098">
    <property type="protein sequence ID" value="EAW70100.1"/>
    <property type="molecule type" value="Genomic_DNA"/>
</dbReference>
<dbReference type="EMBL" id="BC117360">
    <property type="protein sequence ID" value="AAI17361.1"/>
    <property type="molecule type" value="mRNA"/>
</dbReference>
<dbReference type="CCDS" id="CCDS31073.1"/>
<dbReference type="PIR" id="S23754">
    <property type="entry name" value="S38787"/>
</dbReference>
<dbReference type="RefSeq" id="NP_001368782.1">
    <property type="nucleotide sequence ID" value="NM_001381853.1"/>
</dbReference>
<dbReference type="RefSeq" id="NP_001368783.1">
    <property type="nucleotide sequence ID" value="NM_001381854.1"/>
</dbReference>
<dbReference type="RefSeq" id="NP_001812.2">
    <property type="nucleotide sequence ID" value="NM_001821.4"/>
</dbReference>
<dbReference type="SMR" id="P26374"/>
<dbReference type="BioGRID" id="107546">
    <property type="interactions" value="67"/>
</dbReference>
<dbReference type="FunCoup" id="P26374">
    <property type="interactions" value="2595"/>
</dbReference>
<dbReference type="IntAct" id="P26374">
    <property type="interactions" value="38"/>
</dbReference>
<dbReference type="STRING" id="9606.ENSP00000355511"/>
<dbReference type="GlyGen" id="P26374">
    <property type="glycosylation" value="1 site, 1 O-linked glycan (1 site)"/>
</dbReference>
<dbReference type="iPTMnet" id="P26374"/>
<dbReference type="PhosphoSitePlus" id="P26374"/>
<dbReference type="BioMuta" id="CHML"/>
<dbReference type="DMDM" id="47117837"/>
<dbReference type="jPOST" id="P26374"/>
<dbReference type="MassIVE" id="P26374"/>
<dbReference type="PaxDb" id="9606-ENSP00000355511"/>
<dbReference type="PeptideAtlas" id="P26374"/>
<dbReference type="ProteomicsDB" id="54329"/>
<dbReference type="Pumba" id="P26374"/>
<dbReference type="Antibodypedia" id="20821">
    <property type="antibodies" value="170 antibodies from 31 providers"/>
</dbReference>
<dbReference type="DNASU" id="1122"/>
<dbReference type="Ensembl" id="ENST00000366553.3">
    <property type="protein sequence ID" value="ENSP00000355511.1"/>
    <property type="gene ID" value="ENSG00000203668.3"/>
</dbReference>
<dbReference type="GeneID" id="1122"/>
<dbReference type="KEGG" id="hsa:1122"/>
<dbReference type="MANE-Select" id="ENST00000366553.3">
    <property type="protein sequence ID" value="ENSP00000355511.1"/>
    <property type="RefSeq nucleotide sequence ID" value="NM_001381853.1"/>
    <property type="RefSeq protein sequence ID" value="NP_001368782.1"/>
</dbReference>
<dbReference type="UCSC" id="uc001hzd.4">
    <property type="organism name" value="human"/>
</dbReference>
<dbReference type="AGR" id="HGNC:1941"/>
<dbReference type="CTD" id="1122"/>
<dbReference type="DisGeNET" id="1122"/>
<dbReference type="GeneCards" id="CHML"/>
<dbReference type="HGNC" id="HGNC:1941">
    <property type="gene designation" value="CHML"/>
</dbReference>
<dbReference type="HPA" id="ENSG00000203668">
    <property type="expression patterns" value="Low tissue specificity"/>
</dbReference>
<dbReference type="MIM" id="118825">
    <property type="type" value="gene"/>
</dbReference>
<dbReference type="neXtProt" id="NX_P26374"/>
<dbReference type="OpenTargets" id="ENSG00000203668"/>
<dbReference type="PharmGKB" id="PA26472"/>
<dbReference type="VEuPathDB" id="HostDB:ENSG00000203668"/>
<dbReference type="eggNOG" id="KOG4405">
    <property type="taxonomic scope" value="Eukaryota"/>
</dbReference>
<dbReference type="GeneTree" id="ENSGT00950000182994"/>
<dbReference type="HOGENOM" id="CLU_021695_4_1_1"/>
<dbReference type="InParanoid" id="P26374"/>
<dbReference type="OMA" id="LMKFLTA"/>
<dbReference type="OrthoDB" id="1923006at2759"/>
<dbReference type="PAN-GO" id="P26374">
    <property type="GO annotations" value="6 GO annotations based on evolutionary models"/>
</dbReference>
<dbReference type="PhylomeDB" id="P26374"/>
<dbReference type="TreeFam" id="TF320813"/>
<dbReference type="PathwayCommons" id="P26374"/>
<dbReference type="Reactome" id="R-HSA-8873719">
    <property type="pathway name" value="RAB geranylgeranylation"/>
</dbReference>
<dbReference type="Reactome" id="R-HSA-8876198">
    <property type="pathway name" value="RAB GEFs exchange GTP for GDP on RABs"/>
</dbReference>
<dbReference type="SignaLink" id="P26374"/>
<dbReference type="BioGRID-ORCS" id="1122">
    <property type="hits" value="12 hits in 1148 CRISPR screens"/>
</dbReference>
<dbReference type="GeneWiki" id="CHML_(gene)"/>
<dbReference type="GenomeRNAi" id="1122"/>
<dbReference type="Pharos" id="P26374">
    <property type="development level" value="Tbio"/>
</dbReference>
<dbReference type="PRO" id="PR:P26374"/>
<dbReference type="Proteomes" id="UP000005640">
    <property type="component" value="Chromosome 1"/>
</dbReference>
<dbReference type="RNAct" id="P26374">
    <property type="molecule type" value="protein"/>
</dbReference>
<dbReference type="Bgee" id="ENSG00000203668">
    <property type="expression patterns" value="Expressed in sperm and 180 other cell types or tissues"/>
</dbReference>
<dbReference type="ExpressionAtlas" id="P26374">
    <property type="expression patterns" value="baseline and differential"/>
</dbReference>
<dbReference type="GO" id="GO:0005829">
    <property type="term" value="C:cytosol"/>
    <property type="evidence" value="ECO:0000314"/>
    <property type="project" value="HPA"/>
</dbReference>
<dbReference type="GO" id="GO:0005654">
    <property type="term" value="C:nucleoplasm"/>
    <property type="evidence" value="ECO:0000314"/>
    <property type="project" value="HPA"/>
</dbReference>
<dbReference type="GO" id="GO:0005634">
    <property type="term" value="C:nucleus"/>
    <property type="evidence" value="ECO:0000318"/>
    <property type="project" value="GO_Central"/>
</dbReference>
<dbReference type="GO" id="GO:0005968">
    <property type="term" value="C:Rab-protein geranylgeranyltransferase complex"/>
    <property type="evidence" value="ECO:0000315"/>
    <property type="project" value="UniProtKB"/>
</dbReference>
<dbReference type="GO" id="GO:0005092">
    <property type="term" value="F:GDP-dissociation inhibitor activity"/>
    <property type="evidence" value="ECO:0007669"/>
    <property type="project" value="InterPro"/>
</dbReference>
<dbReference type="GO" id="GO:0005096">
    <property type="term" value="F:GTPase activator activity"/>
    <property type="evidence" value="ECO:0007669"/>
    <property type="project" value="UniProtKB-KW"/>
</dbReference>
<dbReference type="GO" id="GO:0031267">
    <property type="term" value="F:small GTPase binding"/>
    <property type="evidence" value="ECO:0000314"/>
    <property type="project" value="UniProtKB"/>
</dbReference>
<dbReference type="GO" id="GO:0006886">
    <property type="term" value="P:intracellular protein transport"/>
    <property type="evidence" value="ECO:0007669"/>
    <property type="project" value="InterPro"/>
</dbReference>
<dbReference type="GO" id="GO:0018344">
    <property type="term" value="P:protein geranylgeranylation"/>
    <property type="evidence" value="ECO:0000314"/>
    <property type="project" value="UniProtKB"/>
</dbReference>
<dbReference type="GO" id="GO:0007264">
    <property type="term" value="P:small GTPase-mediated signal transduction"/>
    <property type="evidence" value="ECO:0007669"/>
    <property type="project" value="InterPro"/>
</dbReference>
<dbReference type="GO" id="GO:0016192">
    <property type="term" value="P:vesicle-mediated transport"/>
    <property type="evidence" value="ECO:0000318"/>
    <property type="project" value="GO_Central"/>
</dbReference>
<dbReference type="FunFam" id="1.10.405.10:FF:000003">
    <property type="entry name" value="Rab proteins geranylgeranyltransferase component A"/>
    <property type="match status" value="1"/>
</dbReference>
<dbReference type="FunFam" id="3.50.50.60:FF:000108">
    <property type="entry name" value="Rab proteins geranylgeranyltransferase component A"/>
    <property type="match status" value="1"/>
</dbReference>
<dbReference type="Gene3D" id="3.50.50.60">
    <property type="entry name" value="FAD/NAD(P)-binding domain"/>
    <property type="match status" value="2"/>
</dbReference>
<dbReference type="Gene3D" id="1.10.405.10">
    <property type="entry name" value="Guanine Nucleotide Dissociation Inhibitor, domain 1"/>
    <property type="match status" value="1"/>
</dbReference>
<dbReference type="Gene3D" id="3.30.519.10">
    <property type="entry name" value="Guanine Nucleotide Dissociation Inhibitor, domain 2"/>
    <property type="match status" value="1"/>
</dbReference>
<dbReference type="InterPro" id="IPR036188">
    <property type="entry name" value="FAD/NAD-bd_sf"/>
</dbReference>
<dbReference type="InterPro" id="IPR018203">
    <property type="entry name" value="GDP_dissociation_inhibitor"/>
</dbReference>
<dbReference type="InterPro" id="IPR001738">
    <property type="entry name" value="Rab_escort"/>
</dbReference>
<dbReference type="InterPro" id="IPR054420">
    <property type="entry name" value="RAE1_2_domI_C"/>
</dbReference>
<dbReference type="PANTHER" id="PTHR11787">
    <property type="entry name" value="RAB GDP-DISSOCIATION INHIBITOR"/>
    <property type="match status" value="1"/>
</dbReference>
<dbReference type="PANTHER" id="PTHR11787:SF9">
    <property type="entry name" value="RAB PROTEINS GERANYLGERANYLTRANSFERASE COMPONENT A 2"/>
    <property type="match status" value="1"/>
</dbReference>
<dbReference type="Pfam" id="PF00996">
    <property type="entry name" value="GDI"/>
    <property type="match status" value="1"/>
</dbReference>
<dbReference type="Pfam" id="PF22603">
    <property type="entry name" value="RAE1_2_domI_C"/>
    <property type="match status" value="1"/>
</dbReference>
<dbReference type="PIRSF" id="PIRSF016550">
    <property type="entry name" value="Rab_ger_ger_transf_A_euk"/>
    <property type="match status" value="1"/>
</dbReference>
<dbReference type="PRINTS" id="PR00893">
    <property type="entry name" value="RABESCORT"/>
</dbReference>
<dbReference type="PRINTS" id="PR00891">
    <property type="entry name" value="RABGDIREP"/>
</dbReference>
<dbReference type="SUPFAM" id="SSF54373">
    <property type="entry name" value="FAD-linked reductases, C-terminal domain"/>
    <property type="match status" value="1"/>
</dbReference>
<dbReference type="SUPFAM" id="SSF51905">
    <property type="entry name" value="FAD/NAD(P)-binding domain"/>
    <property type="match status" value="1"/>
</dbReference>
<feature type="chain" id="PRO_0000056689" description="Rab proteins geranylgeranyltransferase component A 2">
    <location>
        <begin position="1"/>
        <end position="656"/>
    </location>
</feature>
<feature type="region of interest" description="Disordered" evidence="1">
    <location>
        <begin position="188"/>
        <end position="209"/>
    </location>
</feature>
<feature type="region of interest" description="Disordered" evidence="1">
    <location>
        <begin position="609"/>
        <end position="656"/>
    </location>
</feature>
<feature type="compositionally biased region" description="Basic and acidic residues" evidence="1">
    <location>
        <begin position="639"/>
        <end position="656"/>
    </location>
</feature>
<feature type="modified residue" description="Phosphoserine" evidence="8">
    <location>
        <position position="649"/>
    </location>
</feature>
<feature type="sequence conflict" description="In Ref. 1; CAA45979." evidence="7" ref="1">
    <original>C</original>
    <variation>P</variation>
    <location>
        <position position="103"/>
    </location>
</feature>
<sequence>MADNLPTEFDVVIIGTGLPESILAAACSRSGQRVLHIDSRSYYGGNWASFSFSGLLSWLKEYQQNNDIGEESTVVWQDLIHETEEAITLRKKDETIQHTEAFCYASQDMEDNVEEIGALQKNPSLGVSNTFTEVLDSALPEESQLSYFNSDEMPAKHTQKSDTEISLEVTDVEESVEKEKYCGDKTCMHTVSDKDGDKDESKSTVEDKADEPIRNRITYSQIVKEGRRFNIDLVSKLLYSQGLLIDLLIKSDVSRYVEFKNVTRILAFREGKVEQVPCSRADVFNSKELTMVEKRMLMKFLTFCLEYEQHPDEYQAFRQCSFSEYLKTKKLTPNLQHFVLHSIAMTSESSCTTIDGLNATKNFLQCLGRFGNTPFLFPLYGQGEIPQGFCRMCAVFGGIYCLRHKVQCFVVDKESGRCKAIIDHFGQRINAKYFIVEDSYLSEETCSNVQYKQISRAVLITDQSILKTDLDQQTSILIVPPAEPGACAVRVTELCSSTMTCMKDTYLVHLTCSSSKTAREDLESVVKKLFTPYTETEINEEELTKPRLLWALYFNMRDSSGISRSSYNGLPSNVYVCSGPDCGLGNEHAVKQAETLFQEIFPTEEFCPPPPNPEDIIFDGDDKQPEAPGTNNVVMAKLESSEESKNLESPEKHLQN</sequence>
<comment type="function">
    <text evidence="2 3 6">Substrate-binding subunit (component A) of the Rab geranylgeranyltransferase (GGTase) complex. Binds unprenylated Rab proteins and presents the substrate peptide to the catalytic component B. The component A is thought to be regenerated by transferring its prenylated Rab back to the donor membrane. Less effective than CHM in supporting prenylation of Rab3 family.</text>
</comment>
<comment type="subunit">
    <text evidence="2 3 4 5 6">Monomer (PubMed:8294464). Heterotrimer composed of RABGGTA, RABGGTB and CHML; within this trimer, RABGGTA and RABGGTB form the catalytic component B, while CHML (component A) mediates Rab protein binding (PubMed:12356470). Interacts with RAB1A, RAB7A and RAB27A, but has much lower affinity for RAB1A, RAB7A and RAB27A than CHM (PubMed:15186776). Interacts with the non-phosphorylated forms of RAB3A, RAB3B, RAB3C, RAB3D, RAB5B, RAB5C, RAB8A, RAB8B, RAB10, RAB12, RAB35, and RAB43 (PubMed:26824392, PubMed:29125462).</text>
</comment>
<comment type="subcellular location">
    <subcellularLocation>
        <location evidence="2">Cytoplasm</location>
        <location evidence="2">Cytosol</location>
    </subcellularLocation>
</comment>
<comment type="miscellaneous">
    <text>Substitutes for REP-1 thereby preventing widespread tissue abnormalities in patients with choroideremia who lack REP-1.</text>
</comment>
<comment type="similarity">
    <text evidence="7">Belongs to the Rab GDI family.</text>
</comment>
<name>RAE2_HUMAN</name>
<proteinExistence type="evidence at protein level"/>
<gene>
    <name type="primary">CHML</name>
    <name type="synonym">REP2</name>
</gene>
<evidence type="ECO:0000256" key="1">
    <source>
        <dbReference type="SAM" id="MobiDB-lite"/>
    </source>
</evidence>
<evidence type="ECO:0000269" key="2">
    <source>
    </source>
</evidence>
<evidence type="ECO:0000269" key="3">
    <source>
    </source>
</evidence>
<evidence type="ECO:0000269" key="4">
    <source>
    </source>
</evidence>
<evidence type="ECO:0000269" key="5">
    <source>
    </source>
</evidence>
<evidence type="ECO:0000269" key="6">
    <source>
    </source>
</evidence>
<evidence type="ECO:0000305" key="7"/>
<evidence type="ECO:0007744" key="8">
    <source>
    </source>
</evidence>
<organism>
    <name type="scientific">Homo sapiens</name>
    <name type="common">Human</name>
    <dbReference type="NCBI Taxonomy" id="9606"/>
    <lineage>
        <taxon>Eukaryota</taxon>
        <taxon>Metazoa</taxon>
        <taxon>Chordata</taxon>
        <taxon>Craniata</taxon>
        <taxon>Vertebrata</taxon>
        <taxon>Euteleostomi</taxon>
        <taxon>Mammalia</taxon>
        <taxon>Eutheria</taxon>
        <taxon>Euarchontoglires</taxon>
        <taxon>Primates</taxon>
        <taxon>Haplorrhini</taxon>
        <taxon>Catarrhini</taxon>
        <taxon>Hominidae</taxon>
        <taxon>Homo</taxon>
    </lineage>
</organism>